<proteinExistence type="evidence at transcript level"/>
<name>LGI2_PANTR</name>
<reference key="1">
    <citation type="submission" date="2004-05" db="EMBL/GenBank/DDBJ databases">
        <title>The evolution of the LGI family.</title>
        <authorList>
            <person name="Gu W."/>
            <person name="Gilbert Y."/>
            <person name="Freudenberg J."/>
            <person name="Elischer A."/>
            <person name="Bloch W."/>
            <person name="Meyer A."/>
            <person name="Steinlein O."/>
            <person name="Begemann G."/>
        </authorList>
    </citation>
    <scope>NUCLEOTIDE SEQUENCE [MRNA]</scope>
</reference>
<sequence>MALRRGGCGALGLLLLLLGAACLIPRSAQVRRLARCPATCSCTKESIICVGSSWVPRIVPGDISSLSLVNGTFSEIKDRMFSHLPSLQLLLLNSNSFTIIRDDAFAGLFHLEYLFIEGNKIETISRNAFRGLRDLTHLSLANNHIKALPRDVFSDLDSLIELDLRGNKFECDCKAKWLYLWLKMTNSTVSDVLCIGPPEYQEKKLNDVTSFDYECTTTDFVVHQTLPYQSVSVDTFNSKNDVYVAIAQPSMENCMVLEWDHIEMNFRSYDNITGQSIVGCKAILIDDQVFVVVAQLFGGSHIYKYDESWTKFVKFQDIEVSRISKPNDIELFQIDDETFFVIADSSKAGLSTVYKWNSKGFYSYQSLHEWFRDTDAEFVDIDGKSHLILSSRSQVPIILQWNKSSKKFVPHGDIPNMEDVLAVKSFRMQNTLYLSLTRFIGDSRVMRWNSKQFVEIQALPSRGAMTLQPFSFKDNHYLALGSDYTFSQIYQWDKEKQLFKKFKEIYVQAPRSFTAVSTDRRDFFFASSFKGKTKIFEHIIVDLSL</sequence>
<protein>
    <recommendedName>
        <fullName>Leucine-rich repeat LGI family member 2</fullName>
    </recommendedName>
    <alternativeName>
        <fullName>Leucine-rich glioma-inactivated protein 2</fullName>
    </alternativeName>
</protein>
<accession>Q1EGL1</accession>
<keyword id="KW-0325">Glycoprotein</keyword>
<keyword id="KW-0433">Leucine-rich repeat</keyword>
<keyword id="KW-1185">Reference proteome</keyword>
<keyword id="KW-0677">Repeat</keyword>
<keyword id="KW-0964">Secreted</keyword>
<keyword id="KW-0732">Signal</keyword>
<organism>
    <name type="scientific">Pan troglodytes</name>
    <name type="common">Chimpanzee</name>
    <dbReference type="NCBI Taxonomy" id="9598"/>
    <lineage>
        <taxon>Eukaryota</taxon>
        <taxon>Metazoa</taxon>
        <taxon>Chordata</taxon>
        <taxon>Craniata</taxon>
        <taxon>Vertebrata</taxon>
        <taxon>Euteleostomi</taxon>
        <taxon>Mammalia</taxon>
        <taxon>Eutheria</taxon>
        <taxon>Euarchontoglires</taxon>
        <taxon>Primates</taxon>
        <taxon>Haplorrhini</taxon>
        <taxon>Catarrhini</taxon>
        <taxon>Hominidae</taxon>
        <taxon>Pan</taxon>
    </lineage>
</organism>
<gene>
    <name type="primary">LGI2</name>
</gene>
<comment type="function">
    <text evidence="1">Required for the development of soma-targeting inhibitory GABAergic synapses made by parvalbumin-positive basket cells.</text>
</comment>
<comment type="subcellular location">
    <subcellularLocation>
        <location evidence="4">Secreted</location>
    </subcellularLocation>
</comment>
<feature type="signal peptide" evidence="2">
    <location>
        <begin position="1"/>
        <end position="28"/>
    </location>
</feature>
<feature type="chain" id="PRO_0000251157" description="Leucine-rich repeat LGI family member 2">
    <location>
        <begin position="29"/>
        <end position="545"/>
    </location>
</feature>
<feature type="domain" description="LRRNT">
    <location>
        <begin position="29"/>
        <end position="65"/>
    </location>
</feature>
<feature type="repeat" description="LRR 1">
    <location>
        <begin position="86"/>
        <end position="107"/>
    </location>
</feature>
<feature type="repeat" description="LRR 2">
    <location>
        <begin position="110"/>
        <end position="131"/>
    </location>
</feature>
<feature type="repeat" description="LRR 3">
    <location>
        <begin position="134"/>
        <end position="155"/>
    </location>
</feature>
<feature type="domain" description="LRRCT">
    <location>
        <begin position="167"/>
        <end position="217"/>
    </location>
</feature>
<feature type="repeat" description="EAR 1" evidence="3">
    <location>
        <begin position="219"/>
        <end position="261"/>
    </location>
</feature>
<feature type="repeat" description="EAR 2" evidence="3">
    <location>
        <begin position="265"/>
        <end position="307"/>
    </location>
</feature>
<feature type="repeat" description="EAR 3" evidence="3">
    <location>
        <begin position="311"/>
        <end position="358"/>
    </location>
</feature>
<feature type="repeat" description="EAR 4" evidence="3">
    <location>
        <begin position="360"/>
        <end position="403"/>
    </location>
</feature>
<feature type="repeat" description="EAR 5" evidence="3">
    <location>
        <begin position="407"/>
        <end position="450"/>
    </location>
</feature>
<feature type="repeat" description="EAR 6" evidence="3">
    <location>
        <begin position="452"/>
        <end position="494"/>
    </location>
</feature>
<feature type="repeat" description="EAR 7" evidence="3">
    <location>
        <begin position="498"/>
        <end position="540"/>
    </location>
</feature>
<feature type="glycosylation site" description="N-linked (GlcNAc...) asparagine" evidence="2">
    <location>
        <position position="70"/>
    </location>
</feature>
<feature type="glycosylation site" description="N-linked (GlcNAc...) asparagine" evidence="2">
    <location>
        <position position="186"/>
    </location>
</feature>
<feature type="glycosylation site" description="N-linked (GlcNAc...) asparagine" evidence="2">
    <location>
        <position position="271"/>
    </location>
</feature>
<feature type="glycosylation site" description="N-linked (GlcNAc...) asparagine" evidence="2">
    <location>
        <position position="402"/>
    </location>
</feature>
<evidence type="ECO:0000250" key="1">
    <source>
        <dbReference type="UniProtKB" id="Q8K4Z0"/>
    </source>
</evidence>
<evidence type="ECO:0000255" key="2"/>
<evidence type="ECO:0000255" key="3">
    <source>
        <dbReference type="PROSITE-ProRule" id="PRU00075"/>
    </source>
</evidence>
<evidence type="ECO:0000305" key="4"/>
<dbReference type="EMBL" id="AY615299">
    <property type="protein sequence ID" value="AAV49151.1"/>
    <property type="molecule type" value="mRNA"/>
</dbReference>
<dbReference type="RefSeq" id="NP_001037843.1">
    <property type="nucleotide sequence ID" value="NM_001044378.1"/>
</dbReference>
<dbReference type="SMR" id="Q1EGL1"/>
<dbReference type="FunCoup" id="Q1EGL1">
    <property type="interactions" value="164"/>
</dbReference>
<dbReference type="STRING" id="9598.ENSPTRP00000089349"/>
<dbReference type="GlyCosmos" id="Q1EGL1">
    <property type="glycosylation" value="4 sites, No reported glycans"/>
</dbReference>
<dbReference type="PaxDb" id="9598-ENSPTRP00000027477"/>
<dbReference type="Ensembl" id="ENSPTRT00000078744.1">
    <property type="protein sequence ID" value="ENSPTRP00000089349.1"/>
    <property type="gene ID" value="ENSPTRG00000045126.1"/>
</dbReference>
<dbReference type="GeneID" id="471159"/>
<dbReference type="KEGG" id="ptr:471159"/>
<dbReference type="CTD" id="55203"/>
<dbReference type="VGNC" id="VGNC:13016">
    <property type="gene designation" value="LGI2"/>
</dbReference>
<dbReference type="eggNOG" id="ENOG502QR53">
    <property type="taxonomic scope" value="Eukaryota"/>
</dbReference>
<dbReference type="GeneTree" id="ENSGT00940000157294"/>
<dbReference type="HOGENOM" id="CLU_036403_0_0_1"/>
<dbReference type="InParanoid" id="Q1EGL1"/>
<dbReference type="OMA" id="CWRESAL"/>
<dbReference type="OrthoDB" id="4551at9604"/>
<dbReference type="TreeFam" id="TF333155"/>
<dbReference type="Proteomes" id="UP000002277">
    <property type="component" value="Chromosome 4"/>
</dbReference>
<dbReference type="Bgee" id="ENSPTRG00000045126">
    <property type="expression patterns" value="Expressed in colon and 11 other cell types or tissues"/>
</dbReference>
<dbReference type="GO" id="GO:0005576">
    <property type="term" value="C:extracellular region"/>
    <property type="evidence" value="ECO:0007669"/>
    <property type="project" value="UniProtKB-SubCell"/>
</dbReference>
<dbReference type="GO" id="GO:1904862">
    <property type="term" value="P:inhibitory synapse assembly"/>
    <property type="evidence" value="ECO:0000250"/>
    <property type="project" value="UniProtKB"/>
</dbReference>
<dbReference type="FunFam" id="3.80.10.10:FF:000017">
    <property type="entry name" value="leucine-rich repeat LGI family member 3"/>
    <property type="match status" value="1"/>
</dbReference>
<dbReference type="Gene3D" id="3.80.10.10">
    <property type="entry name" value="Ribonuclease Inhibitor"/>
    <property type="match status" value="1"/>
</dbReference>
<dbReference type="InterPro" id="IPR000483">
    <property type="entry name" value="Cys-rich_flank_reg_C"/>
</dbReference>
<dbReference type="InterPro" id="IPR009039">
    <property type="entry name" value="EAR"/>
</dbReference>
<dbReference type="InterPro" id="IPR005492">
    <property type="entry name" value="EPTP"/>
</dbReference>
<dbReference type="InterPro" id="IPR001611">
    <property type="entry name" value="Leu-rich_rpt"/>
</dbReference>
<dbReference type="InterPro" id="IPR003591">
    <property type="entry name" value="Leu-rich_rpt_typical-subtyp"/>
</dbReference>
<dbReference type="InterPro" id="IPR051295">
    <property type="entry name" value="LGI_related"/>
</dbReference>
<dbReference type="InterPro" id="IPR032675">
    <property type="entry name" value="LRR_dom_sf"/>
</dbReference>
<dbReference type="PANTHER" id="PTHR24367:SF21">
    <property type="entry name" value="LEUCINE-RICH REPEAT LGI FAMILY MEMBER 2"/>
    <property type="match status" value="1"/>
</dbReference>
<dbReference type="PANTHER" id="PTHR24367">
    <property type="entry name" value="LEUCINE-RICH REPEAT-CONTAINING PROTEIN"/>
    <property type="match status" value="1"/>
</dbReference>
<dbReference type="Pfam" id="PF03736">
    <property type="entry name" value="EPTP"/>
    <property type="match status" value="7"/>
</dbReference>
<dbReference type="Pfam" id="PF13855">
    <property type="entry name" value="LRR_8"/>
    <property type="match status" value="1"/>
</dbReference>
<dbReference type="SMART" id="SM00369">
    <property type="entry name" value="LRR_TYP"/>
    <property type="match status" value="3"/>
</dbReference>
<dbReference type="SMART" id="SM00082">
    <property type="entry name" value="LRRCT"/>
    <property type="match status" value="1"/>
</dbReference>
<dbReference type="SUPFAM" id="SSF52058">
    <property type="entry name" value="L domain-like"/>
    <property type="match status" value="1"/>
</dbReference>
<dbReference type="SUPFAM" id="SSF101908">
    <property type="entry name" value="Putative isomerase YbhE"/>
    <property type="match status" value="1"/>
</dbReference>
<dbReference type="PROSITE" id="PS50912">
    <property type="entry name" value="EAR"/>
    <property type="match status" value="7"/>
</dbReference>